<reference key="1">
    <citation type="journal article" date="2009" name="J. Bacteriol.">
        <title>Complete genome sequence of Rhodobacter sphaeroides KD131.</title>
        <authorList>
            <person name="Lim S.-K."/>
            <person name="Kim S.J."/>
            <person name="Cha S.H."/>
            <person name="Oh Y.-K."/>
            <person name="Rhee H.-J."/>
            <person name="Kim M.-S."/>
            <person name="Lee J.K."/>
        </authorList>
    </citation>
    <scope>NUCLEOTIDE SEQUENCE [LARGE SCALE GENOMIC DNA]</scope>
    <source>
        <strain>KD131 / KCTC 12085</strain>
    </source>
</reference>
<evidence type="ECO:0000255" key="1">
    <source>
        <dbReference type="HAMAP-Rule" id="MF_00457"/>
    </source>
</evidence>
<comment type="similarity">
    <text evidence="1">Belongs to the UPF0173 family.</text>
</comment>
<sequence length="230" mass="24876">MKITWLGHSGFRIAIEQAVLLVDPWLTGNPLFPADRREEALAGATHILITHGHGDHTGDTVAIAKERGLPVVGIYDLVTWLQEKEGIDGIGFNKGGTVTLGGARVTMVQATHSSSMSGEAGPIYTGTESGYMIAGEGHVIYLSGDTDIMADMGWMGEYHRPDVGILSAGGHFTMDMKRAAFAARKYFDFRTVIPCHYRTFPLLEQSAEALKEGLPGVEVIEPQVLVPIEI</sequence>
<keyword id="KW-0378">Hydrolase</keyword>
<protein>
    <recommendedName>
        <fullName evidence="1">UPF0173 metal-dependent hydrolase RSKD131_0588</fullName>
    </recommendedName>
</protein>
<accession>B9KPF5</accession>
<name>Y588_CERSK</name>
<organism>
    <name type="scientific">Cereibacter sphaeroides (strain KD131 / KCTC 12085)</name>
    <name type="common">Rhodobacter sphaeroides</name>
    <dbReference type="NCBI Taxonomy" id="557760"/>
    <lineage>
        <taxon>Bacteria</taxon>
        <taxon>Pseudomonadati</taxon>
        <taxon>Pseudomonadota</taxon>
        <taxon>Alphaproteobacteria</taxon>
        <taxon>Rhodobacterales</taxon>
        <taxon>Paracoccaceae</taxon>
        <taxon>Cereibacter</taxon>
    </lineage>
</organism>
<proteinExistence type="inferred from homology"/>
<dbReference type="EMBL" id="CP001150">
    <property type="protein sequence ID" value="ACM00448.1"/>
    <property type="molecule type" value="Genomic_DNA"/>
</dbReference>
<dbReference type="RefSeq" id="WP_012643828.1">
    <property type="nucleotide sequence ID" value="NC_011963.1"/>
</dbReference>
<dbReference type="SMR" id="B9KPF5"/>
<dbReference type="GeneID" id="67446040"/>
<dbReference type="KEGG" id="rsk:RSKD131_0588"/>
<dbReference type="HOGENOM" id="CLU_070010_4_0_5"/>
<dbReference type="GO" id="GO:0016787">
    <property type="term" value="F:hydrolase activity"/>
    <property type="evidence" value="ECO:0007669"/>
    <property type="project" value="UniProtKB-UniRule"/>
</dbReference>
<dbReference type="Gene3D" id="3.60.15.10">
    <property type="entry name" value="Ribonuclease Z/Hydroxyacylglutathione hydrolase-like"/>
    <property type="match status" value="1"/>
</dbReference>
<dbReference type="HAMAP" id="MF_00457">
    <property type="entry name" value="UPF0173"/>
    <property type="match status" value="1"/>
</dbReference>
<dbReference type="InterPro" id="IPR001279">
    <property type="entry name" value="Metallo-B-lactamas"/>
</dbReference>
<dbReference type="InterPro" id="IPR036866">
    <property type="entry name" value="RibonucZ/Hydroxyglut_hydro"/>
</dbReference>
<dbReference type="InterPro" id="IPR022877">
    <property type="entry name" value="UPF0173"/>
</dbReference>
<dbReference type="InterPro" id="IPR050114">
    <property type="entry name" value="UPF0173_UPF0282_UlaG_hydrolase"/>
</dbReference>
<dbReference type="NCBIfam" id="NF001911">
    <property type="entry name" value="PRK00685.1"/>
    <property type="match status" value="1"/>
</dbReference>
<dbReference type="PANTHER" id="PTHR43546:SF3">
    <property type="entry name" value="UPF0173 METAL-DEPENDENT HYDROLASE MJ1163"/>
    <property type="match status" value="1"/>
</dbReference>
<dbReference type="PANTHER" id="PTHR43546">
    <property type="entry name" value="UPF0173 METAL-DEPENDENT HYDROLASE MJ1163-RELATED"/>
    <property type="match status" value="1"/>
</dbReference>
<dbReference type="Pfam" id="PF12706">
    <property type="entry name" value="Lactamase_B_2"/>
    <property type="match status" value="1"/>
</dbReference>
<dbReference type="SMART" id="SM00849">
    <property type="entry name" value="Lactamase_B"/>
    <property type="match status" value="1"/>
</dbReference>
<dbReference type="SUPFAM" id="SSF56281">
    <property type="entry name" value="Metallo-hydrolase/oxidoreductase"/>
    <property type="match status" value="1"/>
</dbReference>
<gene>
    <name type="ordered locus">RSKD131_0588</name>
</gene>
<feature type="chain" id="PRO_1000197816" description="UPF0173 metal-dependent hydrolase RSKD131_0588">
    <location>
        <begin position="1"/>
        <end position="230"/>
    </location>
</feature>